<reference key="1">
    <citation type="journal article" date="2003" name="Appl. Microbiol. Biotechnol.">
        <title>The Corynebacterium glutamicum genome: features and impacts on biotechnological processes.</title>
        <authorList>
            <person name="Ikeda M."/>
            <person name="Nakagawa S."/>
        </authorList>
    </citation>
    <scope>NUCLEOTIDE SEQUENCE [LARGE SCALE GENOMIC DNA]</scope>
    <source>
        <strain>ATCC 13032 / DSM 20300 / JCM 1318 / BCRC 11384 / CCUG 27702 / LMG 3730 / NBRC 12168 / NCIMB 10025 / NRRL B-2784 / 534</strain>
    </source>
</reference>
<reference key="2">
    <citation type="journal article" date="2003" name="J. Biotechnol.">
        <title>The complete Corynebacterium glutamicum ATCC 13032 genome sequence and its impact on the production of L-aspartate-derived amino acids and vitamins.</title>
        <authorList>
            <person name="Kalinowski J."/>
            <person name="Bathe B."/>
            <person name="Bartels D."/>
            <person name="Bischoff N."/>
            <person name="Bott M."/>
            <person name="Burkovski A."/>
            <person name="Dusch N."/>
            <person name="Eggeling L."/>
            <person name="Eikmanns B.J."/>
            <person name="Gaigalat L."/>
            <person name="Goesmann A."/>
            <person name="Hartmann M."/>
            <person name="Huthmacher K."/>
            <person name="Kraemer R."/>
            <person name="Linke B."/>
            <person name="McHardy A.C."/>
            <person name="Meyer F."/>
            <person name="Moeckel B."/>
            <person name="Pfefferle W."/>
            <person name="Puehler A."/>
            <person name="Rey D.A."/>
            <person name="Rueckert C."/>
            <person name="Rupp O."/>
            <person name="Sahm H."/>
            <person name="Wendisch V.F."/>
            <person name="Wiegraebe I."/>
            <person name="Tauch A."/>
        </authorList>
    </citation>
    <scope>NUCLEOTIDE SEQUENCE [LARGE SCALE GENOMIC DNA]</scope>
    <source>
        <strain>ATCC 13032 / DSM 20300 / JCM 1318 / BCRC 11384 / CCUG 27702 / LMG 3730 / NBRC 12168 / NCIMB 10025 / NRRL B-2784 / 534</strain>
    </source>
</reference>
<dbReference type="EC" id="6.1.1.17" evidence="1"/>
<dbReference type="EMBL" id="BA000036">
    <property type="protein sequence ID" value="BAB98686.1"/>
    <property type="molecule type" value="Genomic_DNA"/>
</dbReference>
<dbReference type="EMBL" id="BX927151">
    <property type="protein sequence ID" value="CAF19995.1"/>
    <property type="status" value="ALT_INIT"/>
    <property type="molecule type" value="Genomic_DNA"/>
</dbReference>
<dbReference type="RefSeq" id="NP_600515.1">
    <property type="nucleotide sequence ID" value="NC_003450.3"/>
</dbReference>
<dbReference type="SMR" id="Q8NQX9"/>
<dbReference type="STRING" id="196627.cg1463"/>
<dbReference type="KEGG" id="cgb:cg1463"/>
<dbReference type="KEGG" id="cgl:Cgl1293"/>
<dbReference type="PATRIC" id="fig|196627.13.peg.1270"/>
<dbReference type="eggNOG" id="COG0008">
    <property type="taxonomic scope" value="Bacteria"/>
</dbReference>
<dbReference type="HOGENOM" id="CLU_015768_6_1_11"/>
<dbReference type="OrthoDB" id="9807503at2"/>
<dbReference type="BioCyc" id="CORYNE:G18NG-10866-MONOMER"/>
<dbReference type="Proteomes" id="UP000000582">
    <property type="component" value="Chromosome"/>
</dbReference>
<dbReference type="Proteomes" id="UP000001009">
    <property type="component" value="Chromosome"/>
</dbReference>
<dbReference type="GO" id="GO:0005829">
    <property type="term" value="C:cytosol"/>
    <property type="evidence" value="ECO:0007669"/>
    <property type="project" value="TreeGrafter"/>
</dbReference>
<dbReference type="GO" id="GO:0005524">
    <property type="term" value="F:ATP binding"/>
    <property type="evidence" value="ECO:0007669"/>
    <property type="project" value="UniProtKB-UniRule"/>
</dbReference>
<dbReference type="GO" id="GO:0004818">
    <property type="term" value="F:glutamate-tRNA ligase activity"/>
    <property type="evidence" value="ECO:0007669"/>
    <property type="project" value="UniProtKB-UniRule"/>
</dbReference>
<dbReference type="GO" id="GO:0000049">
    <property type="term" value="F:tRNA binding"/>
    <property type="evidence" value="ECO:0007669"/>
    <property type="project" value="InterPro"/>
</dbReference>
<dbReference type="GO" id="GO:0008270">
    <property type="term" value="F:zinc ion binding"/>
    <property type="evidence" value="ECO:0007669"/>
    <property type="project" value="InterPro"/>
</dbReference>
<dbReference type="GO" id="GO:0006424">
    <property type="term" value="P:glutamyl-tRNA aminoacylation"/>
    <property type="evidence" value="ECO:0007669"/>
    <property type="project" value="UniProtKB-UniRule"/>
</dbReference>
<dbReference type="CDD" id="cd00808">
    <property type="entry name" value="GluRS_core"/>
    <property type="match status" value="1"/>
</dbReference>
<dbReference type="FunFam" id="3.40.50.620:FF:000149">
    <property type="entry name" value="Glutamate--tRNA ligase"/>
    <property type="match status" value="1"/>
</dbReference>
<dbReference type="Gene3D" id="1.10.10.350">
    <property type="match status" value="1"/>
</dbReference>
<dbReference type="Gene3D" id="1.10.8.70">
    <property type="entry name" value="Glutamate-tRNA synthetase, class I, anticodon-binding domain 1"/>
    <property type="match status" value="1"/>
</dbReference>
<dbReference type="Gene3D" id="1.10.1160.10">
    <property type="entry name" value="Glutamyl-trna Synthetase, Domain 2"/>
    <property type="match status" value="1"/>
</dbReference>
<dbReference type="Gene3D" id="3.90.800.10">
    <property type="entry name" value="Glutamyl-tRNA Synthetase, Domain 3"/>
    <property type="match status" value="1"/>
</dbReference>
<dbReference type="Gene3D" id="3.40.50.620">
    <property type="entry name" value="HUPs"/>
    <property type="match status" value="1"/>
</dbReference>
<dbReference type="HAMAP" id="MF_00022">
    <property type="entry name" value="Glu_tRNA_synth_type1"/>
    <property type="match status" value="1"/>
</dbReference>
<dbReference type="InterPro" id="IPR045462">
    <property type="entry name" value="aa-tRNA-synth_I_cd-bd"/>
</dbReference>
<dbReference type="InterPro" id="IPR020751">
    <property type="entry name" value="aa-tRNA-synth_I_codon-bd_sub2"/>
</dbReference>
<dbReference type="InterPro" id="IPR008925">
    <property type="entry name" value="aa_tRNA-synth_I_cd-bd_sf"/>
</dbReference>
<dbReference type="InterPro" id="IPR004527">
    <property type="entry name" value="Glu-tRNA-ligase_bac/mito"/>
</dbReference>
<dbReference type="InterPro" id="IPR020752">
    <property type="entry name" value="Glu-tRNA-synth_I_codon-bd_sub1"/>
</dbReference>
<dbReference type="InterPro" id="IPR000924">
    <property type="entry name" value="Glu/Gln-tRNA-synth"/>
</dbReference>
<dbReference type="InterPro" id="IPR020058">
    <property type="entry name" value="Glu/Gln-tRNA-synth_Ib_cat-dom"/>
</dbReference>
<dbReference type="InterPro" id="IPR020061">
    <property type="entry name" value="Glu_tRNA_lig_a-bdl"/>
</dbReference>
<dbReference type="InterPro" id="IPR049940">
    <property type="entry name" value="GluQ/Sye"/>
</dbReference>
<dbReference type="InterPro" id="IPR033910">
    <property type="entry name" value="GluRS_core"/>
</dbReference>
<dbReference type="InterPro" id="IPR014729">
    <property type="entry name" value="Rossmann-like_a/b/a_fold"/>
</dbReference>
<dbReference type="NCBIfam" id="TIGR00464">
    <property type="entry name" value="gltX_bact"/>
    <property type="match status" value="1"/>
</dbReference>
<dbReference type="PANTHER" id="PTHR43311">
    <property type="entry name" value="GLUTAMATE--TRNA LIGASE"/>
    <property type="match status" value="1"/>
</dbReference>
<dbReference type="PANTHER" id="PTHR43311:SF2">
    <property type="entry name" value="GLUTAMATE--TRNA LIGASE, MITOCHONDRIAL-RELATED"/>
    <property type="match status" value="1"/>
</dbReference>
<dbReference type="Pfam" id="PF19269">
    <property type="entry name" value="Anticodon_2"/>
    <property type="match status" value="1"/>
</dbReference>
<dbReference type="Pfam" id="PF00749">
    <property type="entry name" value="tRNA-synt_1c"/>
    <property type="match status" value="1"/>
</dbReference>
<dbReference type="PRINTS" id="PR00987">
    <property type="entry name" value="TRNASYNTHGLU"/>
</dbReference>
<dbReference type="SUPFAM" id="SSF48163">
    <property type="entry name" value="An anticodon-binding domain of class I aminoacyl-tRNA synthetases"/>
    <property type="match status" value="1"/>
</dbReference>
<dbReference type="SUPFAM" id="SSF52374">
    <property type="entry name" value="Nucleotidylyl transferase"/>
    <property type="match status" value="1"/>
</dbReference>
<keyword id="KW-0030">Aminoacyl-tRNA synthetase</keyword>
<keyword id="KW-0067">ATP-binding</keyword>
<keyword id="KW-0963">Cytoplasm</keyword>
<keyword id="KW-0436">Ligase</keyword>
<keyword id="KW-0547">Nucleotide-binding</keyword>
<keyword id="KW-0648">Protein biosynthesis</keyword>
<keyword id="KW-1185">Reference proteome</keyword>
<evidence type="ECO:0000255" key="1">
    <source>
        <dbReference type="HAMAP-Rule" id="MF_00022"/>
    </source>
</evidence>
<evidence type="ECO:0000305" key="2"/>
<feature type="chain" id="PRO_0000119549" description="Glutamate--tRNA ligase">
    <location>
        <begin position="1"/>
        <end position="493"/>
    </location>
</feature>
<feature type="short sequence motif" description="'HIGH' region" evidence="1">
    <location>
        <begin position="10"/>
        <end position="20"/>
    </location>
</feature>
<feature type="short sequence motif" description="'KMSKS' region" evidence="1">
    <location>
        <begin position="254"/>
        <end position="258"/>
    </location>
</feature>
<feature type="binding site" evidence="1">
    <location>
        <position position="257"/>
    </location>
    <ligand>
        <name>ATP</name>
        <dbReference type="ChEBI" id="CHEBI:30616"/>
    </ligand>
</feature>
<accession>Q8NQX9</accession>
<comment type="function">
    <text evidence="1">Catalyzes the attachment of glutamate to tRNA(Glu) in a two-step reaction: glutamate is first activated by ATP to form Glu-AMP and then transferred to the acceptor end of tRNA(Glu).</text>
</comment>
<comment type="catalytic activity">
    <reaction evidence="1">
        <text>tRNA(Glu) + L-glutamate + ATP = L-glutamyl-tRNA(Glu) + AMP + diphosphate</text>
        <dbReference type="Rhea" id="RHEA:23540"/>
        <dbReference type="Rhea" id="RHEA-COMP:9663"/>
        <dbReference type="Rhea" id="RHEA-COMP:9680"/>
        <dbReference type="ChEBI" id="CHEBI:29985"/>
        <dbReference type="ChEBI" id="CHEBI:30616"/>
        <dbReference type="ChEBI" id="CHEBI:33019"/>
        <dbReference type="ChEBI" id="CHEBI:78442"/>
        <dbReference type="ChEBI" id="CHEBI:78520"/>
        <dbReference type="ChEBI" id="CHEBI:456215"/>
        <dbReference type="EC" id="6.1.1.17"/>
    </reaction>
</comment>
<comment type="subunit">
    <text evidence="1">Monomer.</text>
</comment>
<comment type="subcellular location">
    <subcellularLocation>
        <location evidence="1">Cytoplasm</location>
    </subcellularLocation>
</comment>
<comment type="similarity">
    <text evidence="1">Belongs to the class-I aminoacyl-tRNA synthetase family. Glutamate--tRNA ligase type 1 subfamily.</text>
</comment>
<comment type="sequence caution" evidence="2">
    <conflict type="erroneous initiation">
        <sequence resource="EMBL-CDS" id="CAF19995"/>
    </conflict>
</comment>
<protein>
    <recommendedName>
        <fullName evidence="1">Glutamate--tRNA ligase</fullName>
        <ecNumber evidence="1">6.1.1.17</ecNumber>
    </recommendedName>
    <alternativeName>
        <fullName evidence="1">Glutamyl-tRNA synthetase</fullName>
        <shortName evidence="1">GluRS</shortName>
    </alternativeName>
</protein>
<organism>
    <name type="scientific">Corynebacterium glutamicum (strain ATCC 13032 / DSM 20300 / JCM 1318 / BCRC 11384 / CCUG 27702 / LMG 3730 / NBRC 12168 / NCIMB 10025 / NRRL B-2784 / 534)</name>
    <dbReference type="NCBI Taxonomy" id="196627"/>
    <lineage>
        <taxon>Bacteria</taxon>
        <taxon>Bacillati</taxon>
        <taxon>Actinomycetota</taxon>
        <taxon>Actinomycetes</taxon>
        <taxon>Mycobacteriales</taxon>
        <taxon>Corynebacteriaceae</taxon>
        <taxon>Corynebacterium</taxon>
    </lineage>
</organism>
<gene>
    <name evidence="1" type="primary">gltX</name>
    <name type="synonym">gltS</name>
    <name type="ordered locus">Cgl1293</name>
    <name type="ordered locus">cg1463</name>
</gene>
<sequence>MTDVRVRFCPSPTGTPHVGLVRTALFNWAYARHTGGKLVFRIEDTDAARDSEESYSAIIDSLRWLGMDWDEGVEKGGPHEPYRQSQRKDIYQDVLKQLIDAGEVYPAYSTAEEVEERHKAAGRDPKLGYDNFDRDLTEEQVAAFEAEGRKPVWRLRMPEQDWKWTDLVRGEVEFKSFTQPDFVVARSNGEPLYTLVNPVDDALMEVTHVLRGEDLLPSTPRQLALYEALKRIGVAKATPAFGHLPFVMGEGNKKLSKRDPQSSLFNHRDNGIIPEGMLNYLALLGWSLSADQDIFGVDELIANFDVADVLGNPARFDQKKLEAINADHIRLLEPKDFEARLRAYMTEYTEFPADYPAEKFAIAAELVQTRIKVLSEAWDLLKFLVTADEDLVFNEKAAKKNLKETAVEPLNAGIAALEAVEEWTTPNIEAALNKALIEDLGLKPRVAFGALRIGISGEAVSPPLFESMELLGKESTLVRLKVTREQTPFVVAE</sequence>
<proteinExistence type="inferred from homology"/>
<name>SYE_CORGL</name>